<feature type="chain" id="PRO_0000364724" description="Fructose-1,6-bisphosphatase class 1">
    <location>
        <begin position="1"/>
        <end position="338"/>
    </location>
</feature>
<feature type="binding site" evidence="1">
    <location>
        <position position="90"/>
    </location>
    <ligand>
        <name>Mg(2+)</name>
        <dbReference type="ChEBI" id="CHEBI:18420"/>
        <label>1</label>
    </ligand>
</feature>
<feature type="binding site" evidence="1">
    <location>
        <position position="112"/>
    </location>
    <ligand>
        <name>Mg(2+)</name>
        <dbReference type="ChEBI" id="CHEBI:18420"/>
        <label>1</label>
    </ligand>
</feature>
<feature type="binding site" evidence="1">
    <location>
        <position position="112"/>
    </location>
    <ligand>
        <name>Mg(2+)</name>
        <dbReference type="ChEBI" id="CHEBI:18420"/>
        <label>2</label>
    </ligand>
</feature>
<feature type="binding site" evidence="1">
    <location>
        <position position="114"/>
    </location>
    <ligand>
        <name>Mg(2+)</name>
        <dbReference type="ChEBI" id="CHEBI:18420"/>
        <label>1</label>
    </ligand>
</feature>
<feature type="binding site" evidence="1">
    <location>
        <begin position="115"/>
        <end position="118"/>
    </location>
    <ligand>
        <name>substrate</name>
    </ligand>
</feature>
<feature type="binding site" evidence="1">
    <location>
        <position position="115"/>
    </location>
    <ligand>
        <name>Mg(2+)</name>
        <dbReference type="ChEBI" id="CHEBI:18420"/>
        <label>2</label>
    </ligand>
</feature>
<feature type="binding site" evidence="1">
    <location>
        <position position="207"/>
    </location>
    <ligand>
        <name>substrate</name>
    </ligand>
</feature>
<feature type="binding site" evidence="1">
    <location>
        <position position="273"/>
    </location>
    <ligand>
        <name>substrate</name>
    </ligand>
</feature>
<feature type="binding site" evidence="1">
    <location>
        <position position="279"/>
    </location>
    <ligand>
        <name>Mg(2+)</name>
        <dbReference type="ChEBI" id="CHEBI:18420"/>
        <label>2</label>
    </ligand>
</feature>
<gene>
    <name evidence="1" type="primary">fbp</name>
    <name type="ordered locus">Smal_0020</name>
</gene>
<reference key="1">
    <citation type="submission" date="2008-06" db="EMBL/GenBank/DDBJ databases">
        <title>Complete sequence of Stenotrophomonas maltophilia R551-3.</title>
        <authorList>
            <consortium name="US DOE Joint Genome Institute"/>
            <person name="Lucas S."/>
            <person name="Copeland A."/>
            <person name="Lapidus A."/>
            <person name="Glavina del Rio T."/>
            <person name="Dalin E."/>
            <person name="Tice H."/>
            <person name="Pitluck S."/>
            <person name="Chain P."/>
            <person name="Malfatti S."/>
            <person name="Shin M."/>
            <person name="Vergez L."/>
            <person name="Lang D."/>
            <person name="Schmutz J."/>
            <person name="Larimer F."/>
            <person name="Land M."/>
            <person name="Hauser L."/>
            <person name="Kyrpides N."/>
            <person name="Mikhailova N."/>
            <person name="Taghavi S."/>
            <person name="Monchy S."/>
            <person name="Newman L."/>
            <person name="Vangronsveld J."/>
            <person name="van der Lelie D."/>
            <person name="Richardson P."/>
        </authorList>
    </citation>
    <scope>NUCLEOTIDE SEQUENCE [LARGE SCALE GENOMIC DNA]</scope>
    <source>
        <strain>R551-3</strain>
    </source>
</reference>
<protein>
    <recommendedName>
        <fullName evidence="1">Fructose-1,6-bisphosphatase class 1</fullName>
        <shortName evidence="1">FBPase class 1</shortName>
        <ecNumber evidence="1">3.1.3.11</ecNumber>
    </recommendedName>
    <alternativeName>
        <fullName evidence="1">D-fructose-1,6-bisphosphate 1-phosphohydrolase class 1</fullName>
    </alternativeName>
</protein>
<proteinExistence type="inferred from homology"/>
<comment type="catalytic activity">
    <reaction evidence="1">
        <text>beta-D-fructose 1,6-bisphosphate + H2O = beta-D-fructose 6-phosphate + phosphate</text>
        <dbReference type="Rhea" id="RHEA:11064"/>
        <dbReference type="ChEBI" id="CHEBI:15377"/>
        <dbReference type="ChEBI" id="CHEBI:32966"/>
        <dbReference type="ChEBI" id="CHEBI:43474"/>
        <dbReference type="ChEBI" id="CHEBI:57634"/>
        <dbReference type="EC" id="3.1.3.11"/>
    </reaction>
</comment>
<comment type="cofactor">
    <cofactor evidence="1">
        <name>Mg(2+)</name>
        <dbReference type="ChEBI" id="CHEBI:18420"/>
    </cofactor>
    <text evidence="1">Binds 2 magnesium ions per subunit.</text>
</comment>
<comment type="pathway">
    <text evidence="1">Carbohydrate biosynthesis; gluconeogenesis.</text>
</comment>
<comment type="subunit">
    <text evidence="1">Homotetramer.</text>
</comment>
<comment type="subcellular location">
    <subcellularLocation>
        <location evidence="1">Cytoplasm</location>
    </subcellularLocation>
</comment>
<comment type="similarity">
    <text evidence="1">Belongs to the FBPase class 1 family.</text>
</comment>
<accession>B4SR24</accession>
<dbReference type="EC" id="3.1.3.11" evidence="1"/>
<dbReference type="EMBL" id="CP001111">
    <property type="protein sequence ID" value="ACF49725.1"/>
    <property type="molecule type" value="Genomic_DNA"/>
</dbReference>
<dbReference type="RefSeq" id="WP_012509609.1">
    <property type="nucleotide sequence ID" value="NC_011071.1"/>
</dbReference>
<dbReference type="SMR" id="B4SR24"/>
<dbReference type="STRING" id="391008.Smal_0020"/>
<dbReference type="KEGG" id="smt:Smal_0020"/>
<dbReference type="eggNOG" id="COG0158">
    <property type="taxonomic scope" value="Bacteria"/>
</dbReference>
<dbReference type="HOGENOM" id="CLU_039977_0_0_6"/>
<dbReference type="OrthoDB" id="9806756at2"/>
<dbReference type="UniPathway" id="UPA00138"/>
<dbReference type="Proteomes" id="UP000001867">
    <property type="component" value="Chromosome"/>
</dbReference>
<dbReference type="GO" id="GO:0005829">
    <property type="term" value="C:cytosol"/>
    <property type="evidence" value="ECO:0007669"/>
    <property type="project" value="TreeGrafter"/>
</dbReference>
<dbReference type="GO" id="GO:0042132">
    <property type="term" value="F:fructose 1,6-bisphosphate 1-phosphatase activity"/>
    <property type="evidence" value="ECO:0007669"/>
    <property type="project" value="UniProtKB-UniRule"/>
</dbReference>
<dbReference type="GO" id="GO:0000287">
    <property type="term" value="F:magnesium ion binding"/>
    <property type="evidence" value="ECO:0007669"/>
    <property type="project" value="UniProtKB-UniRule"/>
</dbReference>
<dbReference type="GO" id="GO:0030388">
    <property type="term" value="P:fructose 1,6-bisphosphate metabolic process"/>
    <property type="evidence" value="ECO:0007669"/>
    <property type="project" value="TreeGrafter"/>
</dbReference>
<dbReference type="GO" id="GO:0006002">
    <property type="term" value="P:fructose 6-phosphate metabolic process"/>
    <property type="evidence" value="ECO:0007669"/>
    <property type="project" value="TreeGrafter"/>
</dbReference>
<dbReference type="GO" id="GO:0006000">
    <property type="term" value="P:fructose metabolic process"/>
    <property type="evidence" value="ECO:0007669"/>
    <property type="project" value="TreeGrafter"/>
</dbReference>
<dbReference type="GO" id="GO:0006094">
    <property type="term" value="P:gluconeogenesis"/>
    <property type="evidence" value="ECO:0007669"/>
    <property type="project" value="UniProtKB-UniRule"/>
</dbReference>
<dbReference type="GO" id="GO:0005986">
    <property type="term" value="P:sucrose biosynthetic process"/>
    <property type="evidence" value="ECO:0007669"/>
    <property type="project" value="TreeGrafter"/>
</dbReference>
<dbReference type="CDD" id="cd00354">
    <property type="entry name" value="FBPase"/>
    <property type="match status" value="1"/>
</dbReference>
<dbReference type="FunFam" id="3.30.540.10:FF:000006">
    <property type="entry name" value="Fructose-1,6-bisphosphatase class 1"/>
    <property type="match status" value="1"/>
</dbReference>
<dbReference type="FunFam" id="3.40.190.80:FF:000011">
    <property type="entry name" value="Fructose-1,6-bisphosphatase class 1"/>
    <property type="match status" value="1"/>
</dbReference>
<dbReference type="Gene3D" id="3.40.190.80">
    <property type="match status" value="1"/>
</dbReference>
<dbReference type="Gene3D" id="3.30.540.10">
    <property type="entry name" value="Fructose-1,6-Bisphosphatase, subunit A, domain 1"/>
    <property type="match status" value="1"/>
</dbReference>
<dbReference type="HAMAP" id="MF_01855">
    <property type="entry name" value="FBPase_class1"/>
    <property type="match status" value="1"/>
</dbReference>
<dbReference type="InterPro" id="IPR044015">
    <property type="entry name" value="FBPase_C_dom"/>
</dbReference>
<dbReference type="InterPro" id="IPR000146">
    <property type="entry name" value="FBPase_class-1"/>
</dbReference>
<dbReference type="InterPro" id="IPR033391">
    <property type="entry name" value="FBPase_N"/>
</dbReference>
<dbReference type="InterPro" id="IPR028343">
    <property type="entry name" value="FBPtase"/>
</dbReference>
<dbReference type="NCBIfam" id="NF006779">
    <property type="entry name" value="PRK09293.1-3"/>
    <property type="match status" value="1"/>
</dbReference>
<dbReference type="NCBIfam" id="NF006780">
    <property type="entry name" value="PRK09293.1-4"/>
    <property type="match status" value="1"/>
</dbReference>
<dbReference type="PANTHER" id="PTHR11556">
    <property type="entry name" value="FRUCTOSE-1,6-BISPHOSPHATASE-RELATED"/>
    <property type="match status" value="1"/>
</dbReference>
<dbReference type="PANTHER" id="PTHR11556:SF35">
    <property type="entry name" value="SEDOHEPTULOSE-1,7-BISPHOSPHATASE, CHLOROPLASTIC"/>
    <property type="match status" value="1"/>
</dbReference>
<dbReference type="Pfam" id="PF00316">
    <property type="entry name" value="FBPase"/>
    <property type="match status" value="1"/>
</dbReference>
<dbReference type="Pfam" id="PF18913">
    <property type="entry name" value="FBPase_C"/>
    <property type="match status" value="1"/>
</dbReference>
<dbReference type="PIRSF" id="PIRSF500210">
    <property type="entry name" value="FBPtase"/>
    <property type="match status" value="1"/>
</dbReference>
<dbReference type="PIRSF" id="PIRSF000904">
    <property type="entry name" value="FBPtase_SBPase"/>
    <property type="match status" value="1"/>
</dbReference>
<dbReference type="PRINTS" id="PR00115">
    <property type="entry name" value="F16BPHPHTASE"/>
</dbReference>
<dbReference type="SUPFAM" id="SSF56655">
    <property type="entry name" value="Carbohydrate phosphatase"/>
    <property type="match status" value="1"/>
</dbReference>
<sequence>MSRTSLTRFLIQEQHAGRINADLRQLIAVVARACTSISIAVSKGALGGVLGDAGTGNVQGEAQKKLDVISNEILLEANAWGGHLAACASEEMDHSQPVPDIYPRGDFLLLFDPLDGSSNIDVNVSVGTIFSVLRCPTNVELPGDDAFLQPGSKQIAAGYCIYGPSTQLVLTVGHGTHAFTLDREKGEFVLTTENMQIPAATQEFAINMSNQRHWEAPMQAYVGDLLAGKEGARGKNFNMRWIASMVADVHRILTRGGIFIYPWDKKDPSKAGKLRLMYEANPMGLLVEQAGGAAWTGRERILDIQPDQLHQRVPVFLGSREEVAEAVRYHHAHDDARG</sequence>
<name>F16PA_STRM5</name>
<keyword id="KW-0119">Carbohydrate metabolism</keyword>
<keyword id="KW-0963">Cytoplasm</keyword>
<keyword id="KW-0378">Hydrolase</keyword>
<keyword id="KW-0460">Magnesium</keyword>
<keyword id="KW-0479">Metal-binding</keyword>
<organism>
    <name type="scientific">Stenotrophomonas maltophilia (strain R551-3)</name>
    <dbReference type="NCBI Taxonomy" id="391008"/>
    <lineage>
        <taxon>Bacteria</taxon>
        <taxon>Pseudomonadati</taxon>
        <taxon>Pseudomonadota</taxon>
        <taxon>Gammaproteobacteria</taxon>
        <taxon>Lysobacterales</taxon>
        <taxon>Lysobacteraceae</taxon>
        <taxon>Stenotrophomonas</taxon>
        <taxon>Stenotrophomonas maltophilia group</taxon>
    </lineage>
</organism>
<evidence type="ECO:0000255" key="1">
    <source>
        <dbReference type="HAMAP-Rule" id="MF_01855"/>
    </source>
</evidence>